<accession>Q09580</accession>
<accession>Q0G842</accession>
<accession>Q7JMN1</accession>
<name>GUAA_CAEEL</name>
<organism>
    <name type="scientific">Caenorhabditis elegans</name>
    <dbReference type="NCBI Taxonomy" id="6239"/>
    <lineage>
        <taxon>Eukaryota</taxon>
        <taxon>Metazoa</taxon>
        <taxon>Ecdysozoa</taxon>
        <taxon>Nematoda</taxon>
        <taxon>Chromadorea</taxon>
        <taxon>Rhabditida</taxon>
        <taxon>Rhabditina</taxon>
        <taxon>Rhabditomorpha</taxon>
        <taxon>Rhabditoidea</taxon>
        <taxon>Rhabditidae</taxon>
        <taxon>Peloderinae</taxon>
        <taxon>Caenorhabditis</taxon>
    </lineage>
</organism>
<gene>
    <name type="primary">gmps-1</name>
    <name type="ORF">M106.4</name>
</gene>
<proteinExistence type="inferred from homology"/>
<sequence length="745" mass="82606">MKRSSSMLDINEDSQHSTNKAPPPKKAPEDRFDSANMNASGSHVTLVENLPVEKVSSGERIAILDFGAQYGKVIDRRVRELLVQSEMFPLNTTARTLIELGGFKGIIISGGPNSVFEPEAPSIDPEIFTCGLPVLGICYGFQLMNKLNGGTVTREHIREDGACEIQVDTSVHLFNGLHKTETVLLTHGDSVSEATVAPDFKVMAKSGHHVAGICNENRKLYGVQFHPEVDLTTNGTKMFENFLFKVVGCCGNFTIQNREQSCISEINSIVGDKKVLVMVSGGVDSAVCAALLRRALGPNRVTAIHIDNGFMRHEESDAVEKSLAALDLPIHRYNFGTTFRSSTEHCKDGEVALDECDDPEMKRKIIGNTFIRVKDVIMKDLNINHDEYFLAQGTLRPDLIESASALASGHADTIKTHHNDTFLVRELRKLGKVVEPLKDFHKDEVRELGKDLGLPESIVQRHPFPGPGLAIRILCASDKRPELMFNGPMYNGDVQGRIIDVTEQFLNSAINPSQGIYEHLQFEQARNNVLLSLSERDRQLAEQQTFQISAHILPIKTVGVQGDARSYSYAVALSTEQRPIPWKLLFAYASVIPKLFHGVNRVVYAFGSKIEFSIEDLTRTYLVPHIVTKLQMADHIANNILFGRVAASDGTQLPNVGHKIQQMPVVLLPVDFDRDRDMIGSYRHSIVLRPFVTSDFMTGQAAIPGVHLPEETLIEMDKAIRTNVLGISRVLLDMTCKPPGTTEWE</sequence>
<evidence type="ECO:0000250" key="1"/>
<evidence type="ECO:0000255" key="2">
    <source>
        <dbReference type="PROSITE-ProRule" id="PRU00605"/>
    </source>
</evidence>
<evidence type="ECO:0000255" key="3">
    <source>
        <dbReference type="PROSITE-ProRule" id="PRU00886"/>
    </source>
</evidence>
<evidence type="ECO:0000256" key="4">
    <source>
        <dbReference type="SAM" id="MobiDB-lite"/>
    </source>
</evidence>
<evidence type="ECO:0000305" key="5"/>
<keyword id="KW-0025">Alternative splicing</keyword>
<keyword id="KW-0067">ATP-binding</keyword>
<keyword id="KW-0315">Glutamine amidotransferase</keyword>
<keyword id="KW-0332">GMP biosynthesis</keyword>
<keyword id="KW-0436">Ligase</keyword>
<keyword id="KW-0547">Nucleotide-binding</keyword>
<keyword id="KW-0658">Purine biosynthesis</keyword>
<keyword id="KW-1185">Reference proteome</keyword>
<dbReference type="EC" id="6.3.5.2"/>
<dbReference type="EMBL" id="Z46935">
    <property type="protein sequence ID" value="CAA87052.2"/>
    <property type="molecule type" value="Genomic_DNA"/>
</dbReference>
<dbReference type="EMBL" id="Z46935">
    <property type="protein sequence ID" value="CAE48508.2"/>
    <property type="molecule type" value="Genomic_DNA"/>
</dbReference>
<dbReference type="EMBL" id="Z46935">
    <property type="protein sequence ID" value="CAL36508.1"/>
    <property type="molecule type" value="Genomic_DNA"/>
</dbReference>
<dbReference type="PIR" id="T23742">
    <property type="entry name" value="T23742"/>
</dbReference>
<dbReference type="RefSeq" id="NP_001022256.2">
    <molecule id="Q09580-2"/>
    <property type="nucleotide sequence ID" value="NM_001027085.4"/>
</dbReference>
<dbReference type="RefSeq" id="NP_001022257.2">
    <molecule id="Q09580-1"/>
    <property type="nucleotide sequence ID" value="NM_001027086.6"/>
</dbReference>
<dbReference type="RefSeq" id="NP_001076631.1">
    <molecule id="Q09580-3"/>
    <property type="nucleotide sequence ID" value="NM_001083162.5"/>
</dbReference>
<dbReference type="SMR" id="Q09580"/>
<dbReference type="BioGRID" id="39982">
    <property type="interactions" value="22"/>
</dbReference>
<dbReference type="DIP" id="DIP-25638N"/>
<dbReference type="FunCoup" id="Q09580">
    <property type="interactions" value="3397"/>
</dbReference>
<dbReference type="IntAct" id="Q09580">
    <property type="interactions" value="2"/>
</dbReference>
<dbReference type="STRING" id="6239.M106.4b.1"/>
<dbReference type="MEROPS" id="C26.A24"/>
<dbReference type="PaxDb" id="6239-M106.4b"/>
<dbReference type="PeptideAtlas" id="Q09580"/>
<dbReference type="EnsemblMetazoa" id="M106.4a.1">
    <molecule id="Q09580-2"/>
    <property type="protein sequence ID" value="M106.4a.1"/>
    <property type="gene ID" value="WBGene00010912"/>
</dbReference>
<dbReference type="EnsemblMetazoa" id="M106.4a.2">
    <molecule id="Q09580-2"/>
    <property type="protein sequence ID" value="M106.4a.2"/>
    <property type="gene ID" value="WBGene00010912"/>
</dbReference>
<dbReference type="EnsemblMetazoa" id="M106.4b.1">
    <molecule id="Q09580-1"/>
    <property type="protein sequence ID" value="M106.4b.1"/>
    <property type="gene ID" value="WBGene00010912"/>
</dbReference>
<dbReference type="EnsemblMetazoa" id="M106.4b.2">
    <molecule id="Q09580-1"/>
    <property type="protein sequence ID" value="M106.4b.2"/>
    <property type="gene ID" value="WBGene00010912"/>
</dbReference>
<dbReference type="EnsemblMetazoa" id="M106.4c.1">
    <molecule id="Q09580-3"/>
    <property type="protein sequence ID" value="M106.4c.1"/>
    <property type="gene ID" value="WBGene00010912"/>
</dbReference>
<dbReference type="GeneID" id="174672"/>
<dbReference type="KEGG" id="cel:CELE_M106.4"/>
<dbReference type="UCSC" id="M106.4a">
    <property type="organism name" value="c. elegans"/>
</dbReference>
<dbReference type="AGR" id="WB:WBGene00010912"/>
<dbReference type="CTD" id="174672"/>
<dbReference type="WormBase" id="M106.4a">
    <molecule id="Q09580-2"/>
    <property type="protein sequence ID" value="CE47006"/>
    <property type="gene ID" value="WBGene00010912"/>
    <property type="gene designation" value="gmps-1"/>
</dbReference>
<dbReference type="WormBase" id="M106.4b">
    <molecule id="Q09580-1"/>
    <property type="protein sequence ID" value="CE47051"/>
    <property type="gene ID" value="WBGene00010912"/>
    <property type="gene designation" value="gmps-1"/>
</dbReference>
<dbReference type="WormBase" id="M106.4c">
    <molecule id="Q09580-3"/>
    <property type="protein sequence ID" value="CE40394"/>
    <property type="gene ID" value="WBGene00010912"/>
    <property type="gene designation" value="gmps-1"/>
</dbReference>
<dbReference type="eggNOG" id="KOG1622">
    <property type="taxonomic scope" value="Eukaryota"/>
</dbReference>
<dbReference type="GeneTree" id="ENSGT00390000006591"/>
<dbReference type="InParanoid" id="Q09580"/>
<dbReference type="OMA" id="IWQSFAV"/>
<dbReference type="OrthoDB" id="1724632at2759"/>
<dbReference type="PhylomeDB" id="Q09580"/>
<dbReference type="Reactome" id="R-CEL-73817">
    <property type="pathway name" value="Purine ribonucleoside monophosphate biosynthesis"/>
</dbReference>
<dbReference type="Reactome" id="R-CEL-9748787">
    <property type="pathway name" value="Azathioprine ADME"/>
</dbReference>
<dbReference type="UniPathway" id="UPA00189">
    <property type="reaction ID" value="UER00296"/>
</dbReference>
<dbReference type="PRO" id="PR:Q09580"/>
<dbReference type="Proteomes" id="UP000001940">
    <property type="component" value="Chromosome II"/>
</dbReference>
<dbReference type="Bgee" id="WBGene00010912">
    <property type="expression patterns" value="Expressed in adult organism and 4 other cell types or tissues"/>
</dbReference>
<dbReference type="GO" id="GO:0005829">
    <property type="term" value="C:cytosol"/>
    <property type="evidence" value="ECO:0000318"/>
    <property type="project" value="GO_Central"/>
</dbReference>
<dbReference type="GO" id="GO:0005524">
    <property type="term" value="F:ATP binding"/>
    <property type="evidence" value="ECO:0007669"/>
    <property type="project" value="UniProtKB-KW"/>
</dbReference>
<dbReference type="GO" id="GO:0003921">
    <property type="term" value="F:GMP synthase activity"/>
    <property type="evidence" value="ECO:0000318"/>
    <property type="project" value="GO_Central"/>
</dbReference>
<dbReference type="GO" id="GO:0006177">
    <property type="term" value="P:GMP biosynthetic process"/>
    <property type="evidence" value="ECO:0000318"/>
    <property type="project" value="GO_Central"/>
</dbReference>
<dbReference type="CDD" id="cd01742">
    <property type="entry name" value="GATase1_GMP_Synthase"/>
    <property type="match status" value="1"/>
</dbReference>
<dbReference type="CDD" id="cd01997">
    <property type="entry name" value="GMP_synthase_C"/>
    <property type="match status" value="1"/>
</dbReference>
<dbReference type="FunFam" id="3.30.300.10:FF:000008">
    <property type="entry name" value="GMP synthase [glutamine-hydrolyzing]"/>
    <property type="match status" value="1"/>
</dbReference>
<dbReference type="FunFam" id="3.40.50.620:FF:000044">
    <property type="entry name" value="GMP synthase [glutamine-hydrolyzing]"/>
    <property type="match status" value="1"/>
</dbReference>
<dbReference type="FunFam" id="3.40.50.880:FF:000013">
    <property type="entry name" value="GMP synthase [glutamine-hydrolyzing]"/>
    <property type="match status" value="1"/>
</dbReference>
<dbReference type="Gene3D" id="3.30.300.10">
    <property type="match status" value="2"/>
</dbReference>
<dbReference type="Gene3D" id="3.40.50.880">
    <property type="match status" value="1"/>
</dbReference>
<dbReference type="Gene3D" id="3.40.50.620">
    <property type="entry name" value="HUPs"/>
    <property type="match status" value="1"/>
</dbReference>
<dbReference type="InterPro" id="IPR029062">
    <property type="entry name" value="Class_I_gatase-like"/>
</dbReference>
<dbReference type="InterPro" id="IPR017926">
    <property type="entry name" value="GATASE"/>
</dbReference>
<dbReference type="InterPro" id="IPR001674">
    <property type="entry name" value="GMP_synth_C"/>
</dbReference>
<dbReference type="InterPro" id="IPR004739">
    <property type="entry name" value="GMP_synth_GATase"/>
</dbReference>
<dbReference type="InterPro" id="IPR025777">
    <property type="entry name" value="GMPS_ATP_PPase_dom"/>
</dbReference>
<dbReference type="InterPro" id="IPR022310">
    <property type="entry name" value="NAD/GMP_synthase"/>
</dbReference>
<dbReference type="InterPro" id="IPR014729">
    <property type="entry name" value="Rossmann-like_a/b/a_fold"/>
</dbReference>
<dbReference type="NCBIfam" id="TIGR00888">
    <property type="entry name" value="guaA_Nterm"/>
    <property type="match status" value="1"/>
</dbReference>
<dbReference type="NCBIfam" id="NF000848">
    <property type="entry name" value="PRK00074.1"/>
    <property type="match status" value="1"/>
</dbReference>
<dbReference type="PANTHER" id="PTHR11922:SF2">
    <property type="entry name" value="GMP SYNTHASE [GLUTAMINE-HYDROLYZING]"/>
    <property type="match status" value="1"/>
</dbReference>
<dbReference type="PANTHER" id="PTHR11922">
    <property type="entry name" value="GMP SYNTHASE-RELATED"/>
    <property type="match status" value="1"/>
</dbReference>
<dbReference type="Pfam" id="PF00117">
    <property type="entry name" value="GATase"/>
    <property type="match status" value="1"/>
</dbReference>
<dbReference type="Pfam" id="PF00958">
    <property type="entry name" value="GMP_synt_C"/>
    <property type="match status" value="2"/>
</dbReference>
<dbReference type="Pfam" id="PF02540">
    <property type="entry name" value="NAD_synthase"/>
    <property type="match status" value="1"/>
</dbReference>
<dbReference type="PRINTS" id="PR00097">
    <property type="entry name" value="ANTSNTHASEII"/>
</dbReference>
<dbReference type="PRINTS" id="PR00096">
    <property type="entry name" value="GATASE"/>
</dbReference>
<dbReference type="SUPFAM" id="SSF52402">
    <property type="entry name" value="Adenine nucleotide alpha hydrolases-like"/>
    <property type="match status" value="1"/>
</dbReference>
<dbReference type="SUPFAM" id="SSF52317">
    <property type="entry name" value="Class I glutamine amidotransferase-like"/>
    <property type="match status" value="1"/>
</dbReference>
<dbReference type="SUPFAM" id="SSF54810">
    <property type="entry name" value="GMP synthetase C-terminal dimerisation domain"/>
    <property type="match status" value="2"/>
</dbReference>
<dbReference type="PROSITE" id="PS51273">
    <property type="entry name" value="GATASE_TYPE_1"/>
    <property type="match status" value="1"/>
</dbReference>
<dbReference type="PROSITE" id="PS51553">
    <property type="entry name" value="GMPS_ATP_PPASE"/>
    <property type="match status" value="1"/>
</dbReference>
<comment type="catalytic activity">
    <reaction>
        <text>XMP + L-glutamine + ATP + H2O = GMP + L-glutamate + AMP + diphosphate + 2 H(+)</text>
        <dbReference type="Rhea" id="RHEA:11680"/>
        <dbReference type="ChEBI" id="CHEBI:15377"/>
        <dbReference type="ChEBI" id="CHEBI:15378"/>
        <dbReference type="ChEBI" id="CHEBI:29985"/>
        <dbReference type="ChEBI" id="CHEBI:30616"/>
        <dbReference type="ChEBI" id="CHEBI:33019"/>
        <dbReference type="ChEBI" id="CHEBI:57464"/>
        <dbReference type="ChEBI" id="CHEBI:58115"/>
        <dbReference type="ChEBI" id="CHEBI:58359"/>
        <dbReference type="ChEBI" id="CHEBI:456215"/>
        <dbReference type="EC" id="6.3.5.2"/>
    </reaction>
</comment>
<comment type="pathway">
    <text>Purine metabolism; GMP biosynthesis; GMP from XMP (L-Gln route): step 1/1.</text>
</comment>
<comment type="subunit">
    <text evidence="1">Homodimer.</text>
</comment>
<comment type="alternative products">
    <event type="alternative splicing"/>
    <isoform>
        <id>Q09580-1</id>
        <name>b</name>
        <sequence type="displayed"/>
    </isoform>
    <isoform>
        <id>Q09580-2</id>
        <name>a</name>
        <sequence type="described" ref="VSP_044290"/>
    </isoform>
    <isoform>
        <id>Q09580-3</id>
        <name>c</name>
        <sequence type="described" ref="VSP_044289"/>
    </isoform>
</comment>
<protein>
    <recommendedName>
        <fullName>Probable GMP synthase [glutamine-hydrolyzing]</fullName>
        <ecNumber>6.3.5.2</ecNumber>
    </recommendedName>
    <alternativeName>
        <fullName>Glutamine amidotransferase</fullName>
    </alternativeName>
</protein>
<feature type="chain" id="PRO_0000140255" description="Probable GMP synthase [glutamine-hydrolyzing]">
    <location>
        <begin position="1"/>
        <end position="745"/>
    </location>
</feature>
<feature type="domain" description="Glutamine amidotransferase type-1" evidence="2">
    <location>
        <begin position="60"/>
        <end position="252"/>
    </location>
</feature>
<feature type="domain" description="GMPS ATP-PPase" evidence="3">
    <location>
        <begin position="253"/>
        <end position="461"/>
    </location>
</feature>
<feature type="region of interest" description="Disordered" evidence="4">
    <location>
        <begin position="1"/>
        <end position="37"/>
    </location>
</feature>
<feature type="active site" description="For GATase activity" evidence="2">
    <location>
        <position position="138"/>
    </location>
</feature>
<feature type="active site" evidence="2">
    <location>
        <position position="226"/>
    </location>
</feature>
<feature type="active site" evidence="2">
    <location>
        <position position="228"/>
    </location>
</feature>
<feature type="binding site" evidence="3">
    <location>
        <begin position="280"/>
        <end position="286"/>
    </location>
    <ligand>
        <name>ATP</name>
        <dbReference type="ChEBI" id="CHEBI:30616"/>
    </ligand>
</feature>
<feature type="binding site" evidence="1">
    <location>
        <position position="363"/>
    </location>
    <ligand>
        <name>substrate</name>
    </ligand>
</feature>
<feature type="binding site" evidence="1">
    <location>
        <position position="563"/>
    </location>
    <ligand>
        <name>substrate</name>
    </ligand>
</feature>
<feature type="binding site" evidence="1">
    <location>
        <position position="662"/>
    </location>
    <ligand>
        <name>substrate</name>
    </ligand>
</feature>
<feature type="binding site" evidence="1">
    <location>
        <position position="737"/>
    </location>
    <ligand>
        <name>substrate</name>
    </ligand>
</feature>
<feature type="binding site" evidence="1">
    <location>
        <position position="743"/>
    </location>
    <ligand>
        <name>substrate</name>
    </ligand>
</feature>
<feature type="splice variant" id="VSP_044289" description="In isoform c." evidence="5">
    <location>
        <begin position="1"/>
        <end position="36"/>
    </location>
</feature>
<feature type="splice variant" id="VSP_044290" description="In isoform a." evidence="5">
    <location>
        <begin position="39"/>
        <end position="40"/>
    </location>
</feature>
<reference key="1">
    <citation type="journal article" date="1998" name="Science">
        <title>Genome sequence of the nematode C. elegans: a platform for investigating biology.</title>
        <authorList>
            <consortium name="The C. elegans sequencing consortium"/>
        </authorList>
    </citation>
    <scope>NUCLEOTIDE SEQUENCE [LARGE SCALE GENOMIC DNA]</scope>
    <scope>ALTERNATIVE SPLICING</scope>
    <source>
        <strain>Bristol N2</strain>
    </source>
</reference>